<accession>B4NX24</accession>
<organism>
    <name type="scientific">Drosophila yakuba</name>
    <name type="common">Fruit fly</name>
    <dbReference type="NCBI Taxonomy" id="7245"/>
    <lineage>
        <taxon>Eukaryota</taxon>
        <taxon>Metazoa</taxon>
        <taxon>Ecdysozoa</taxon>
        <taxon>Arthropoda</taxon>
        <taxon>Hexapoda</taxon>
        <taxon>Insecta</taxon>
        <taxon>Pterygota</taxon>
        <taxon>Neoptera</taxon>
        <taxon>Endopterygota</taxon>
        <taxon>Diptera</taxon>
        <taxon>Brachycera</taxon>
        <taxon>Muscomorpha</taxon>
        <taxon>Ephydroidea</taxon>
        <taxon>Drosophilidae</taxon>
        <taxon>Drosophila</taxon>
        <taxon>Sophophora</taxon>
    </lineage>
</organism>
<name>EIF3J_DROYA</name>
<evidence type="ECO:0000255" key="1">
    <source>
        <dbReference type="HAMAP-Rule" id="MF_03009"/>
    </source>
</evidence>
<evidence type="ECO:0000256" key="2">
    <source>
        <dbReference type="SAM" id="MobiDB-lite"/>
    </source>
</evidence>
<sequence length="236" mass="26598">MADDWESAADSEVVIRPTGAASVNKWEGEDEDEDIKDSWEDEEEKKDEEKPTKTEAPAKPKPNKALKAKLEQQARLEEEAEAQRVANLSPAEKLAEKLRLQKIQEASDLKHAQEAFGVTSTCGGLDAFNPESKEEFKEFGATLSWKVSQFRESEHFPQFVEDLVRSLCVNLSAADIKKVKMNVEILHSEKLKLEKANAKKPAGKGKGKVTLRTENDDIDGYQKYGNDFTEDYDDFM</sequence>
<gene>
    <name evidence="1" type="primary">eIF3j</name>
    <name evidence="1" type="synonym">Adam</name>
    <name type="ORF">GE19320</name>
</gene>
<feature type="chain" id="PRO_0000365143" description="Eukaryotic translation initiation factor 3 subunit J">
    <location>
        <begin position="1"/>
        <end position="236"/>
    </location>
</feature>
<feature type="region of interest" description="Disordered" evidence="2">
    <location>
        <begin position="1"/>
        <end position="84"/>
    </location>
</feature>
<feature type="compositionally biased region" description="Acidic residues" evidence="2">
    <location>
        <begin position="28"/>
        <end position="46"/>
    </location>
</feature>
<feature type="compositionally biased region" description="Basic and acidic residues" evidence="2">
    <location>
        <begin position="47"/>
        <end position="58"/>
    </location>
</feature>
<feature type="compositionally biased region" description="Basic and acidic residues" evidence="2">
    <location>
        <begin position="68"/>
        <end position="77"/>
    </location>
</feature>
<proteinExistence type="inferred from homology"/>
<protein>
    <recommendedName>
        <fullName evidence="1">Eukaryotic translation initiation factor 3 subunit J</fullName>
        <shortName evidence="1">eIF3j</shortName>
    </recommendedName>
</protein>
<comment type="function">
    <text evidence="1">Component of the eukaryotic translation initiation factor 3 (eIF-3) complex, which is involved in protein synthesis of a specialized repertoire of mRNAs and, together with other initiation factors, stimulates binding of mRNA and methionyl-tRNAi to the 40S ribosome. The eIF-3 complex specifically targets and initiates translation of a subset of mRNAs involved in cell proliferation.</text>
</comment>
<comment type="subunit">
    <text evidence="1">Component of the eukaryotic translation initiation factor 3 (eIF-3) complex. The eIF-3 complex interacts with pix.</text>
</comment>
<comment type="subcellular location">
    <subcellularLocation>
        <location evidence="1">Cytoplasm</location>
    </subcellularLocation>
</comment>
<comment type="similarity">
    <text evidence="1">Belongs to the eIF-3 subunit J family.</text>
</comment>
<reference key="1">
    <citation type="journal article" date="2007" name="Nature">
        <title>Evolution of genes and genomes on the Drosophila phylogeny.</title>
        <authorList>
            <consortium name="Drosophila 12 genomes consortium"/>
        </authorList>
    </citation>
    <scope>NUCLEOTIDE SEQUENCE [LARGE SCALE GENOMIC DNA]</scope>
    <source>
        <strain>Tai18E2 / Tucson 14021-0261.01</strain>
    </source>
</reference>
<dbReference type="EMBL" id="CM000157">
    <property type="protein sequence ID" value="EDW89585.1"/>
    <property type="molecule type" value="Genomic_DNA"/>
</dbReference>
<dbReference type="SMR" id="B4NX24"/>
<dbReference type="EnsemblMetazoa" id="FBtr0265838">
    <property type="protein sequence ID" value="FBpp0264330"/>
    <property type="gene ID" value="FBgn0236670"/>
</dbReference>
<dbReference type="EnsemblMetazoa" id="XM_002089837.3">
    <property type="protein sequence ID" value="XP_002089873.1"/>
    <property type="gene ID" value="LOC6528841"/>
</dbReference>
<dbReference type="GeneID" id="6528841"/>
<dbReference type="KEGG" id="dya:Dyak_GE19320"/>
<dbReference type="CTD" id="8669"/>
<dbReference type="eggNOG" id="KOG4813">
    <property type="taxonomic scope" value="Eukaryota"/>
</dbReference>
<dbReference type="HOGENOM" id="CLU_085806_2_0_1"/>
<dbReference type="OMA" id="KPHYALW"/>
<dbReference type="OrthoDB" id="20381at2759"/>
<dbReference type="PhylomeDB" id="B4NX24"/>
<dbReference type="ChiTaRS" id="Adam">
    <property type="organism name" value="fly"/>
</dbReference>
<dbReference type="Proteomes" id="UP000002282">
    <property type="component" value="Chromosome 2L"/>
</dbReference>
<dbReference type="GO" id="GO:0016282">
    <property type="term" value="C:eukaryotic 43S preinitiation complex"/>
    <property type="evidence" value="ECO:0007669"/>
    <property type="project" value="UniProtKB-UniRule"/>
</dbReference>
<dbReference type="GO" id="GO:0033290">
    <property type="term" value="C:eukaryotic 48S preinitiation complex"/>
    <property type="evidence" value="ECO:0007669"/>
    <property type="project" value="UniProtKB-UniRule"/>
</dbReference>
<dbReference type="GO" id="GO:0005852">
    <property type="term" value="C:eukaryotic translation initiation factor 3 complex"/>
    <property type="evidence" value="ECO:0007669"/>
    <property type="project" value="UniProtKB-UniRule"/>
</dbReference>
<dbReference type="GO" id="GO:0003743">
    <property type="term" value="F:translation initiation factor activity"/>
    <property type="evidence" value="ECO:0007669"/>
    <property type="project" value="UniProtKB-UniRule"/>
</dbReference>
<dbReference type="GO" id="GO:0001732">
    <property type="term" value="P:formation of cytoplasmic translation initiation complex"/>
    <property type="evidence" value="ECO:0007669"/>
    <property type="project" value="UniProtKB-UniRule"/>
</dbReference>
<dbReference type="GO" id="GO:0006446">
    <property type="term" value="P:regulation of translational initiation"/>
    <property type="evidence" value="ECO:0007669"/>
    <property type="project" value="EnsemblMetazoa"/>
</dbReference>
<dbReference type="Gene3D" id="1.10.246.60">
    <property type="entry name" value="Eukaryotic translation initiation factor 3 like domains"/>
    <property type="match status" value="1"/>
</dbReference>
<dbReference type="HAMAP" id="MF_03009">
    <property type="entry name" value="eIF3j"/>
    <property type="match status" value="1"/>
</dbReference>
<dbReference type="InterPro" id="IPR023194">
    <property type="entry name" value="eIF3-like_dom_sf"/>
</dbReference>
<dbReference type="InterPro" id="IPR013906">
    <property type="entry name" value="eIF3j"/>
</dbReference>
<dbReference type="PANTHER" id="PTHR21681">
    <property type="entry name" value="EUKARYOTIC TRANSLATION INITIATION FACTOR 3 SUBUNIT J"/>
    <property type="match status" value="1"/>
</dbReference>
<dbReference type="PANTHER" id="PTHR21681:SF0">
    <property type="entry name" value="EUKARYOTIC TRANSLATION INITIATION FACTOR 3 SUBUNIT J"/>
    <property type="match status" value="1"/>
</dbReference>
<dbReference type="Pfam" id="PF08597">
    <property type="entry name" value="eIF3_subunit"/>
    <property type="match status" value="1"/>
</dbReference>
<keyword id="KW-0963">Cytoplasm</keyword>
<keyword id="KW-0396">Initiation factor</keyword>
<keyword id="KW-0648">Protein biosynthesis</keyword>